<evidence type="ECO:0000250" key="1"/>
<evidence type="ECO:0000255" key="2"/>
<evidence type="ECO:0000255" key="3">
    <source>
        <dbReference type="PROSITE-ProRule" id="PRU00711"/>
    </source>
</evidence>
<evidence type="ECO:0000305" key="4"/>
<gene>
    <name type="primary">yccM</name>
    <name type="ordered locus">b0992</name>
    <name type="ordered locus">JW0977</name>
</gene>
<protein>
    <recommendedName>
        <fullName>Putative electron transport protein YccM</fullName>
    </recommendedName>
</protein>
<feature type="chain" id="PRO_0000159303" description="Putative electron transport protein YccM">
    <location>
        <begin position="1"/>
        <end position="357"/>
    </location>
</feature>
<feature type="topological domain" description="Cytoplasmic" evidence="2">
    <location>
        <begin position="1"/>
        <end position="36"/>
    </location>
</feature>
<feature type="transmembrane region" description="Helical" evidence="2">
    <location>
        <begin position="37"/>
        <end position="54"/>
    </location>
</feature>
<feature type="topological domain" description="Periplasmic" evidence="2">
    <location>
        <begin position="55"/>
        <end position="91"/>
    </location>
</feature>
<feature type="transmembrane region" description="Helical" evidence="2">
    <location>
        <begin position="92"/>
        <end position="114"/>
    </location>
</feature>
<feature type="topological domain" description="Cytoplasmic" evidence="2">
    <location>
        <begin position="115"/>
        <end position="158"/>
    </location>
</feature>
<feature type="transmembrane region" description="Helical" evidence="2">
    <location>
        <begin position="159"/>
        <end position="181"/>
    </location>
</feature>
<feature type="topological domain" description="Periplasmic" evidence="2">
    <location>
        <begin position="182"/>
        <end position="195"/>
    </location>
</feature>
<feature type="transmembrane region" description="Helical" evidence="2">
    <location>
        <begin position="196"/>
        <end position="218"/>
    </location>
</feature>
<feature type="topological domain" description="Cytoplasmic" evidence="2">
    <location>
        <begin position="219"/>
        <end position="309"/>
    </location>
</feature>
<feature type="transmembrane region" description="Helical" evidence="2">
    <location>
        <begin position="310"/>
        <end position="332"/>
    </location>
</feature>
<feature type="topological domain" description="Periplasmic" evidence="2">
    <location>
        <begin position="333"/>
        <end position="357"/>
    </location>
</feature>
<feature type="domain" description="4Fe-4S ferredoxin-type 1" evidence="3">
    <location>
        <begin position="242"/>
        <end position="270"/>
    </location>
</feature>
<feature type="domain" description="4Fe-4S ferredoxin-type 2" evidence="3">
    <location>
        <begin position="269"/>
        <end position="299"/>
    </location>
</feature>
<feature type="binding site" evidence="1">
    <location>
        <position position="251"/>
    </location>
    <ligand>
        <name>[4Fe-4S] cluster</name>
        <dbReference type="ChEBI" id="CHEBI:49883"/>
        <label>1</label>
    </ligand>
</feature>
<feature type="binding site" evidence="1">
    <location>
        <position position="254"/>
    </location>
    <ligand>
        <name>[4Fe-4S] cluster</name>
        <dbReference type="ChEBI" id="CHEBI:49883"/>
        <label>1</label>
    </ligand>
</feature>
<feature type="binding site" evidence="1">
    <location>
        <position position="257"/>
    </location>
    <ligand>
        <name>[4Fe-4S] cluster</name>
        <dbReference type="ChEBI" id="CHEBI:49883"/>
        <label>1</label>
    </ligand>
</feature>
<feature type="binding site" evidence="1">
    <location>
        <position position="261"/>
    </location>
    <ligand>
        <name>[4Fe-4S] cluster</name>
        <dbReference type="ChEBI" id="CHEBI:49883"/>
        <label>2</label>
    </ligand>
</feature>
<feature type="binding site" evidence="1">
    <location>
        <position position="278"/>
    </location>
    <ligand>
        <name>[4Fe-4S] cluster</name>
        <dbReference type="ChEBI" id="CHEBI:49883"/>
        <label>2</label>
    </ligand>
</feature>
<feature type="binding site" evidence="1">
    <location>
        <position position="281"/>
    </location>
    <ligand>
        <name>[4Fe-4S] cluster</name>
        <dbReference type="ChEBI" id="CHEBI:49883"/>
        <label>2</label>
    </ligand>
</feature>
<feature type="binding site" evidence="1">
    <location>
        <position position="284"/>
    </location>
    <ligand>
        <name>[4Fe-4S] cluster</name>
        <dbReference type="ChEBI" id="CHEBI:49883"/>
        <label>2</label>
    </ligand>
</feature>
<feature type="binding site" evidence="1">
    <location>
        <position position="288"/>
    </location>
    <ligand>
        <name>[4Fe-4S] cluster</name>
        <dbReference type="ChEBI" id="CHEBI:49883"/>
        <label>1</label>
    </ligand>
</feature>
<feature type="sequence conflict" description="In Ref. 4." evidence="4" ref="4">
    <original>P</original>
    <variation>G</variation>
    <location>
        <position position="262"/>
    </location>
</feature>
<reference key="1">
    <citation type="journal article" date="1996" name="DNA Res.">
        <title>A 718-kb DNA sequence of the Escherichia coli K-12 genome corresponding to the 12.7-28.0 min region on the linkage map.</title>
        <authorList>
            <person name="Oshima T."/>
            <person name="Aiba H."/>
            <person name="Baba T."/>
            <person name="Fujita K."/>
            <person name="Hayashi K."/>
            <person name="Honjo A."/>
            <person name="Ikemoto K."/>
            <person name="Inada T."/>
            <person name="Itoh T."/>
            <person name="Kajihara M."/>
            <person name="Kanai K."/>
            <person name="Kashimoto K."/>
            <person name="Kimura S."/>
            <person name="Kitagawa M."/>
            <person name="Makino K."/>
            <person name="Masuda S."/>
            <person name="Miki T."/>
            <person name="Mizobuchi K."/>
            <person name="Mori H."/>
            <person name="Motomura K."/>
            <person name="Nakamura Y."/>
            <person name="Nashimoto H."/>
            <person name="Nishio Y."/>
            <person name="Saito N."/>
            <person name="Sampei G."/>
            <person name="Seki Y."/>
            <person name="Tagami H."/>
            <person name="Takemoto K."/>
            <person name="Wada C."/>
            <person name="Yamamoto Y."/>
            <person name="Yano M."/>
            <person name="Horiuchi T."/>
        </authorList>
    </citation>
    <scope>NUCLEOTIDE SEQUENCE [LARGE SCALE GENOMIC DNA]</scope>
    <source>
        <strain>K12 / W3110 / ATCC 27325 / DSM 5911</strain>
    </source>
</reference>
<reference key="2">
    <citation type="journal article" date="1997" name="Science">
        <title>The complete genome sequence of Escherichia coli K-12.</title>
        <authorList>
            <person name="Blattner F.R."/>
            <person name="Plunkett G. III"/>
            <person name="Bloch C.A."/>
            <person name="Perna N.T."/>
            <person name="Burland V."/>
            <person name="Riley M."/>
            <person name="Collado-Vides J."/>
            <person name="Glasner J.D."/>
            <person name="Rode C.K."/>
            <person name="Mayhew G.F."/>
            <person name="Gregor J."/>
            <person name="Davis N.W."/>
            <person name="Kirkpatrick H.A."/>
            <person name="Goeden M.A."/>
            <person name="Rose D.J."/>
            <person name="Mau B."/>
            <person name="Shao Y."/>
        </authorList>
    </citation>
    <scope>NUCLEOTIDE SEQUENCE [LARGE SCALE GENOMIC DNA]</scope>
    <source>
        <strain>K12 / MG1655 / ATCC 47076</strain>
    </source>
</reference>
<reference key="3">
    <citation type="journal article" date="2006" name="Mol. Syst. Biol.">
        <title>Highly accurate genome sequences of Escherichia coli K-12 strains MG1655 and W3110.</title>
        <authorList>
            <person name="Hayashi K."/>
            <person name="Morooka N."/>
            <person name="Yamamoto Y."/>
            <person name="Fujita K."/>
            <person name="Isono K."/>
            <person name="Choi S."/>
            <person name="Ohtsubo E."/>
            <person name="Baba T."/>
            <person name="Wanner B.L."/>
            <person name="Mori H."/>
            <person name="Horiuchi T."/>
        </authorList>
    </citation>
    <scope>NUCLEOTIDE SEQUENCE [LARGE SCALE GENOMIC DNA]</scope>
    <source>
        <strain>K12 / W3110 / ATCC 27325 / DSM 5911</strain>
    </source>
</reference>
<reference key="4">
    <citation type="submission" date="1995-11" db="EMBL/GenBank/DDBJ databases">
        <authorList>
            <person name="Rock C.O."/>
            <person name="Tsay J.-T."/>
            <person name="Jackowski S."/>
        </authorList>
    </citation>
    <scope>NUCLEOTIDE SEQUENCE [GENOMIC DNA] OF 262-357</scope>
    <source>
        <strain>K12</strain>
    </source>
</reference>
<reference key="5">
    <citation type="unpublished observations" date="1996-03">
        <authorList>
            <person name="Rudd K.E."/>
        </authorList>
    </citation>
    <scope>IDENTIFICATION</scope>
</reference>
<reference key="6">
    <citation type="journal article" date="2005" name="Science">
        <title>Global topology analysis of the Escherichia coli inner membrane proteome.</title>
        <authorList>
            <person name="Daley D.O."/>
            <person name="Rapp M."/>
            <person name="Granseth E."/>
            <person name="Melen K."/>
            <person name="Drew D."/>
            <person name="von Heijne G."/>
        </authorList>
    </citation>
    <scope>TOPOLOGY [LARGE SCALE ANALYSIS]</scope>
    <source>
        <strain>K12 / MG1655 / ATCC 47076</strain>
    </source>
</reference>
<name>YCCM_ECOLI</name>
<organism>
    <name type="scientific">Escherichia coli (strain K12)</name>
    <dbReference type="NCBI Taxonomy" id="83333"/>
    <lineage>
        <taxon>Bacteria</taxon>
        <taxon>Pseudomonadati</taxon>
        <taxon>Pseudomonadota</taxon>
        <taxon>Gammaproteobacteria</taxon>
        <taxon>Enterobacterales</taxon>
        <taxon>Enterobacteriaceae</taxon>
        <taxon>Escherichia</taxon>
    </lineage>
</organism>
<sequence>MAENKRTRWQRRPGTTGGKLPWNDWRNATTWRKATQLLLLAMNIYIAITFWYWVRYYETASSTTFVARPGGIEGWLPIAGLMNLKYSLVTGQLPSVHAAAMLLLVAFIVISLLLKKAFCSWLCPVGTLSELIGDLGNKLFGRQCVLPRWLDIPLRGVKYLLLSFFIYIALLMPAQAIHYFMLSPYSVVMDVKMLDFFRHMGTATLISVTVLLIASLFIRHAWCRYLCPYGALMGVVSLLSPFKIRRNAESCIDCGKCAKNCPSRIPVDKLIQVRTVECTGCMTCVESCPVASTLTFSLQKPAANKKAFALSGWLMTLLVLGIMFAVIGYAMYAGVWQSPVPEELYRRLIPQAPMIGH</sequence>
<accession>P52636</accession>
<accession>P75886</accession>
<accession>Q9R7Q0</accession>
<keyword id="KW-0004">4Fe-4S</keyword>
<keyword id="KW-0997">Cell inner membrane</keyword>
<keyword id="KW-1003">Cell membrane</keyword>
<keyword id="KW-0249">Electron transport</keyword>
<keyword id="KW-0408">Iron</keyword>
<keyword id="KW-0411">Iron-sulfur</keyword>
<keyword id="KW-0472">Membrane</keyword>
<keyword id="KW-0479">Metal-binding</keyword>
<keyword id="KW-1185">Reference proteome</keyword>
<keyword id="KW-0677">Repeat</keyword>
<keyword id="KW-0812">Transmembrane</keyword>
<keyword id="KW-1133">Transmembrane helix</keyword>
<keyword id="KW-0813">Transport</keyword>
<dbReference type="EMBL" id="U00096">
    <property type="protein sequence ID" value="AAC74077.1"/>
    <property type="molecule type" value="Genomic_DNA"/>
</dbReference>
<dbReference type="EMBL" id="AP009048">
    <property type="protein sequence ID" value="BAA36134.1"/>
    <property type="molecule type" value="Genomic_DNA"/>
</dbReference>
<dbReference type="EMBL" id="U38541">
    <property type="status" value="NOT_ANNOTATED_CDS"/>
    <property type="molecule type" value="Genomic_DNA"/>
</dbReference>
<dbReference type="PIR" id="F64840">
    <property type="entry name" value="F64840"/>
</dbReference>
<dbReference type="RefSeq" id="NP_415512.1">
    <property type="nucleotide sequence ID" value="NC_000913.3"/>
</dbReference>
<dbReference type="RefSeq" id="WP_000829662.1">
    <property type="nucleotide sequence ID" value="NZ_SSZK01000002.1"/>
</dbReference>
<dbReference type="BioGRID" id="4262838">
    <property type="interactions" value="8"/>
</dbReference>
<dbReference type="FunCoup" id="P52636">
    <property type="interactions" value="80"/>
</dbReference>
<dbReference type="STRING" id="511145.b0992"/>
<dbReference type="PaxDb" id="511145-b0992"/>
<dbReference type="EnsemblBacteria" id="AAC74077">
    <property type="protein sequence ID" value="AAC74077"/>
    <property type="gene ID" value="b0992"/>
</dbReference>
<dbReference type="GeneID" id="946295"/>
<dbReference type="KEGG" id="ecj:JW0977"/>
<dbReference type="KEGG" id="eco:b0992"/>
<dbReference type="KEGG" id="ecoc:C3026_06050"/>
<dbReference type="PATRIC" id="fig|1411691.4.peg.1279"/>
<dbReference type="EchoBASE" id="EB3023"/>
<dbReference type="eggNOG" id="COG0348">
    <property type="taxonomic scope" value="Bacteria"/>
</dbReference>
<dbReference type="HOGENOM" id="CLU_033147_0_0_6"/>
<dbReference type="InParanoid" id="P52636"/>
<dbReference type="OMA" id="NFWCRYL"/>
<dbReference type="OrthoDB" id="9806398at2"/>
<dbReference type="PhylomeDB" id="P52636"/>
<dbReference type="BioCyc" id="EcoCyc:G6513-MONOMER"/>
<dbReference type="PRO" id="PR:P52636"/>
<dbReference type="Proteomes" id="UP000000625">
    <property type="component" value="Chromosome"/>
</dbReference>
<dbReference type="GO" id="GO:0005886">
    <property type="term" value="C:plasma membrane"/>
    <property type="evidence" value="ECO:0000314"/>
    <property type="project" value="EcoCyc"/>
</dbReference>
<dbReference type="GO" id="GO:0051539">
    <property type="term" value="F:4 iron, 4 sulfur cluster binding"/>
    <property type="evidence" value="ECO:0007669"/>
    <property type="project" value="UniProtKB-KW"/>
</dbReference>
<dbReference type="GO" id="GO:0046872">
    <property type="term" value="F:metal ion binding"/>
    <property type="evidence" value="ECO:0007669"/>
    <property type="project" value="UniProtKB-KW"/>
</dbReference>
<dbReference type="Gene3D" id="3.30.70.20">
    <property type="match status" value="1"/>
</dbReference>
<dbReference type="InterPro" id="IPR017896">
    <property type="entry name" value="4Fe4S_Fe-S-bd"/>
</dbReference>
<dbReference type="InterPro" id="IPR017900">
    <property type="entry name" value="4Fe4S_Fe_S_CS"/>
</dbReference>
<dbReference type="InterPro" id="IPR052378">
    <property type="entry name" value="NosR_regulator"/>
</dbReference>
<dbReference type="PANTHER" id="PTHR30224">
    <property type="entry name" value="ELECTRON TRANSPORT PROTEIN"/>
    <property type="match status" value="1"/>
</dbReference>
<dbReference type="PANTHER" id="PTHR30224:SF4">
    <property type="entry name" value="ELECTRON TRANSPORT PROTEIN YCCM-RELATED"/>
    <property type="match status" value="1"/>
</dbReference>
<dbReference type="Pfam" id="PF12798">
    <property type="entry name" value="Fer4_3"/>
    <property type="match status" value="2"/>
</dbReference>
<dbReference type="Pfam" id="PF12801">
    <property type="entry name" value="Fer4_5"/>
    <property type="match status" value="2"/>
</dbReference>
<dbReference type="SUPFAM" id="SSF54862">
    <property type="entry name" value="4Fe-4S ferredoxins"/>
    <property type="match status" value="1"/>
</dbReference>
<dbReference type="PROSITE" id="PS00198">
    <property type="entry name" value="4FE4S_FER_1"/>
    <property type="match status" value="2"/>
</dbReference>
<dbReference type="PROSITE" id="PS51379">
    <property type="entry name" value="4FE4S_FER_2"/>
    <property type="match status" value="2"/>
</dbReference>
<proteinExistence type="evidence at protein level"/>
<comment type="subcellular location">
    <subcellularLocation>
        <location>Cell inner membrane</location>
        <topology>Multi-pass membrane protein</topology>
    </subcellularLocation>
</comment>